<gene>
    <name type="primary">BEX5</name>
    <name type="synonym">NGFRAP1L1</name>
</gene>
<organism>
    <name type="scientific">Bos taurus</name>
    <name type="common">Bovine</name>
    <dbReference type="NCBI Taxonomy" id="9913"/>
    <lineage>
        <taxon>Eukaryota</taxon>
        <taxon>Metazoa</taxon>
        <taxon>Chordata</taxon>
        <taxon>Craniata</taxon>
        <taxon>Vertebrata</taxon>
        <taxon>Euteleostomi</taxon>
        <taxon>Mammalia</taxon>
        <taxon>Eutheria</taxon>
        <taxon>Laurasiatheria</taxon>
        <taxon>Artiodactyla</taxon>
        <taxon>Ruminantia</taxon>
        <taxon>Pecora</taxon>
        <taxon>Bovidae</taxon>
        <taxon>Bovinae</taxon>
        <taxon>Bos</taxon>
    </lineage>
</organism>
<keyword id="KW-0963">Cytoplasm</keyword>
<keyword id="KW-0479">Metal-binding</keyword>
<keyword id="KW-1185">Reference proteome</keyword>
<keyword id="KW-0832">Ubl conjugation</keyword>
<keyword id="KW-0862">Zinc</keyword>
<evidence type="ECO:0000250" key="1">
    <source>
        <dbReference type="UniProtKB" id="Q5H9J7"/>
    </source>
</evidence>
<evidence type="ECO:0000250" key="2">
    <source>
        <dbReference type="UniProtKB" id="Q9WTZ9"/>
    </source>
</evidence>
<evidence type="ECO:0000256" key="3">
    <source>
        <dbReference type="SAM" id="MobiDB-lite"/>
    </source>
</evidence>
<evidence type="ECO:0000305" key="4"/>
<sequence length="112" mass="13179">MEKDPKERREEEQAPVQNEEACPMGGGEGPKPRENVRGDWDPPAQDFREDMPNGLVNNIDIIDGDADDMERFMEEMRELRRKIRELQLRYSLRILIGDPPHHDHHDEFCLMP</sequence>
<protein>
    <recommendedName>
        <fullName>Protein BEX5</fullName>
    </recommendedName>
    <alternativeName>
        <fullName>Brain-expressed X-linked protein 5 homolog</fullName>
    </alternativeName>
    <alternativeName>
        <fullName>NGFRAP1-like protein 1</fullName>
    </alternativeName>
</protein>
<proteinExistence type="inferred from homology"/>
<feature type="chain" id="PRO_0000229787" description="Protein BEX5">
    <location>
        <begin position="1"/>
        <end position="112"/>
    </location>
</feature>
<feature type="region of interest" description="Disordered" evidence="3">
    <location>
        <begin position="1"/>
        <end position="56"/>
    </location>
</feature>
<feature type="region of interest" description="His cluster" evidence="2">
    <location>
        <begin position="101"/>
        <end position="105"/>
    </location>
</feature>
<feature type="compositionally biased region" description="Basic and acidic residues" evidence="3">
    <location>
        <begin position="1"/>
        <end position="12"/>
    </location>
</feature>
<feature type="compositionally biased region" description="Basic and acidic residues" evidence="3">
    <location>
        <begin position="30"/>
        <end position="51"/>
    </location>
</feature>
<feature type="binding site" evidence="2">
    <location>
        <position position="109"/>
    </location>
    <ligand>
        <name>Zn(2+)</name>
        <dbReference type="ChEBI" id="CHEBI:29105"/>
        <note>ligand shared with FEM1B</note>
    </ligand>
</feature>
<accession>Q3ZBJ9</accession>
<comment type="subcellular location">
    <subcellularLocation>
        <location evidence="1">Cytoplasm</location>
    </subcellularLocation>
</comment>
<comment type="PTM">
    <text evidence="1">Ubiquitinated. Degraded by the proteasome.</text>
</comment>
<comment type="similarity">
    <text evidence="4">Belongs to the BEX family.</text>
</comment>
<dbReference type="EMBL" id="BC103254">
    <property type="protein sequence ID" value="AAI03255.1"/>
    <property type="molecule type" value="mRNA"/>
</dbReference>
<dbReference type="RefSeq" id="NP_001069203.1">
    <property type="nucleotide sequence ID" value="NM_001075735.1"/>
</dbReference>
<dbReference type="RefSeq" id="XP_010819964.1">
    <property type="nucleotide sequence ID" value="XM_010821662.4"/>
</dbReference>
<dbReference type="SMR" id="Q3ZBJ9"/>
<dbReference type="FunCoup" id="Q3ZBJ9">
    <property type="interactions" value="13"/>
</dbReference>
<dbReference type="STRING" id="9913.ENSBTAP00000019530"/>
<dbReference type="PaxDb" id="9913-ENSBTAP00000019530"/>
<dbReference type="Ensembl" id="ENSBTAT00000111142.1">
    <property type="protein sequence ID" value="ENSBTAP00000085713.1"/>
    <property type="gene ID" value="ENSBTAG00000014670.4"/>
</dbReference>
<dbReference type="Ensembl" id="ENSBTAT00000128776.1">
    <property type="protein sequence ID" value="ENSBTAP00000093444.1"/>
    <property type="gene ID" value="ENSBTAG00000014670.4"/>
</dbReference>
<dbReference type="GeneID" id="516056"/>
<dbReference type="KEGG" id="bta:516056"/>
<dbReference type="CTD" id="340542"/>
<dbReference type="VEuPathDB" id="HostDB:ENSBTAG00000014670"/>
<dbReference type="VGNC" id="VGNC:50553">
    <property type="gene designation" value="BEX5"/>
</dbReference>
<dbReference type="eggNOG" id="ENOG502R12Q">
    <property type="taxonomic scope" value="Eukaryota"/>
</dbReference>
<dbReference type="GeneTree" id="ENSGT00940000153412"/>
<dbReference type="HOGENOM" id="CLU_123122_0_0_1"/>
<dbReference type="InParanoid" id="Q3ZBJ9"/>
<dbReference type="OMA" id="GNIRGEW"/>
<dbReference type="OrthoDB" id="9829209at2759"/>
<dbReference type="TreeFam" id="TF337909"/>
<dbReference type="Proteomes" id="UP000009136">
    <property type="component" value="Chromosome X"/>
</dbReference>
<dbReference type="Bgee" id="ENSBTAG00000014670">
    <property type="expression patterns" value="Expressed in adenohypophysis and 98 other cell types or tissues"/>
</dbReference>
<dbReference type="GO" id="GO:0005737">
    <property type="term" value="C:cytoplasm"/>
    <property type="evidence" value="ECO:0000318"/>
    <property type="project" value="GO_Central"/>
</dbReference>
<dbReference type="GO" id="GO:0046872">
    <property type="term" value="F:metal ion binding"/>
    <property type="evidence" value="ECO:0007669"/>
    <property type="project" value="UniProtKB-KW"/>
</dbReference>
<dbReference type="GO" id="GO:0005102">
    <property type="term" value="F:signaling receptor binding"/>
    <property type="evidence" value="ECO:0000318"/>
    <property type="project" value="GO_Central"/>
</dbReference>
<dbReference type="GO" id="GO:0007165">
    <property type="term" value="P:signal transduction"/>
    <property type="evidence" value="ECO:0000318"/>
    <property type="project" value="GO_Central"/>
</dbReference>
<dbReference type="InterPro" id="IPR007623">
    <property type="entry name" value="BEX"/>
</dbReference>
<dbReference type="InterPro" id="IPR021156">
    <property type="entry name" value="TF_A-like/BEX"/>
</dbReference>
<dbReference type="PANTHER" id="PTHR19430">
    <property type="entry name" value="PROTEIN BEX1-RELATED"/>
    <property type="match status" value="1"/>
</dbReference>
<dbReference type="PANTHER" id="PTHR19430:SF0">
    <property type="entry name" value="PROTEIN BEX5"/>
    <property type="match status" value="1"/>
</dbReference>
<dbReference type="Pfam" id="PF04538">
    <property type="entry name" value="BEX"/>
    <property type="match status" value="1"/>
</dbReference>
<dbReference type="PIRSF" id="PIRSF008633">
    <property type="entry name" value="BEX"/>
    <property type="match status" value="1"/>
</dbReference>
<reference key="1">
    <citation type="submission" date="2005-08" db="EMBL/GenBank/DDBJ databases">
        <authorList>
            <consortium name="NIH - Mammalian Gene Collection (MGC) project"/>
        </authorList>
    </citation>
    <scope>NUCLEOTIDE SEQUENCE [LARGE SCALE MRNA]</scope>
    <source>
        <strain>Hereford</strain>
        <tissue>Kidney</tissue>
    </source>
</reference>
<name>BEX5_BOVIN</name>